<reference key="1">
    <citation type="journal article" date="1991" name="J. Biol. Chem.">
        <title>The sequence and reactive site of ecotin. A general inhibitor of pancreatic serine proteases from Escherichia coli.</title>
        <authorList>
            <person name="McGrath M.E."/>
            <person name="Hines W.M."/>
            <person name="Sakanari J.A."/>
            <person name="Fletterick R.J."/>
            <person name="Craik C.S."/>
        </authorList>
    </citation>
    <scope>NUCLEOTIDE SEQUENCE [GENOMIC DNA]</scope>
    <scope>PROTEIN SEQUENCE OF 21-25 AND 105-109</scope>
</reference>
<reference key="2">
    <citation type="journal article" date="1991" name="FEBS Lett.">
        <title>Molecular cloning of the ecotin gene in Escherichia coli.</title>
        <authorList>
            <person name="Lee H.R."/>
            <person name="Seol J.H."/>
            <person name="Kim O.M."/>
            <person name="Lee C.S."/>
            <person name="Suh S.W."/>
            <person name="Hong Y.M."/>
            <person name="Tanaka K."/>
            <person name="Ichihara A."/>
            <person name="Ha D.B."/>
            <person name="Chung C.H."/>
        </authorList>
    </citation>
    <scope>NUCLEOTIDE SEQUENCE [GENOMIC DNA]</scope>
</reference>
<reference key="3">
    <citation type="submission" date="1993-10" db="EMBL/GenBank/DDBJ databases">
        <title>Automated multiplex sequencing of the E.coli genome.</title>
        <authorList>
            <person name="Richterich P."/>
            <person name="Lakey N."/>
            <person name="Gryan G."/>
            <person name="Jaehn L."/>
            <person name="Mintz L."/>
            <person name="Robison K."/>
            <person name="Church G.M."/>
        </authorList>
    </citation>
    <scope>NUCLEOTIDE SEQUENCE [LARGE SCALE GENOMIC DNA]</scope>
    <source>
        <strain>K12 / BHB2600</strain>
    </source>
</reference>
<reference key="4">
    <citation type="journal article" date="1996" name="DNA Res.">
        <title>A 460-kb DNA sequence of the Escherichia coli K-12 genome corresponding to the 40.1-50.0 min region on the linkage map.</title>
        <authorList>
            <person name="Itoh T."/>
            <person name="Aiba H."/>
            <person name="Baba T."/>
            <person name="Fujita K."/>
            <person name="Hayashi K."/>
            <person name="Inada T."/>
            <person name="Isono K."/>
            <person name="Kasai H."/>
            <person name="Kimura S."/>
            <person name="Kitakawa M."/>
            <person name="Kitagawa M."/>
            <person name="Makino K."/>
            <person name="Miki T."/>
            <person name="Mizobuchi K."/>
            <person name="Mori H."/>
            <person name="Mori T."/>
            <person name="Motomura K."/>
            <person name="Nakade S."/>
            <person name="Nakamura Y."/>
            <person name="Nashimoto H."/>
            <person name="Nishio Y."/>
            <person name="Oshima T."/>
            <person name="Saito N."/>
            <person name="Sampei G."/>
            <person name="Seki Y."/>
            <person name="Sivasundaram S."/>
            <person name="Tagami H."/>
            <person name="Takeda J."/>
            <person name="Takemoto K."/>
            <person name="Wada C."/>
            <person name="Yamamoto Y."/>
            <person name="Horiuchi T."/>
        </authorList>
    </citation>
    <scope>NUCLEOTIDE SEQUENCE [LARGE SCALE GENOMIC DNA]</scope>
    <source>
        <strain>K12 / W3110 / ATCC 27325 / DSM 5911</strain>
    </source>
</reference>
<reference key="5">
    <citation type="journal article" date="1997" name="Science">
        <title>The complete genome sequence of Escherichia coli K-12.</title>
        <authorList>
            <person name="Blattner F.R."/>
            <person name="Plunkett G. III"/>
            <person name="Bloch C.A."/>
            <person name="Perna N.T."/>
            <person name="Burland V."/>
            <person name="Riley M."/>
            <person name="Collado-Vides J."/>
            <person name="Glasner J.D."/>
            <person name="Rode C.K."/>
            <person name="Mayhew G.F."/>
            <person name="Gregor J."/>
            <person name="Davis N.W."/>
            <person name="Kirkpatrick H.A."/>
            <person name="Goeden M.A."/>
            <person name="Rose D.J."/>
            <person name="Mau B."/>
            <person name="Shao Y."/>
        </authorList>
    </citation>
    <scope>NUCLEOTIDE SEQUENCE [LARGE SCALE GENOMIC DNA]</scope>
    <source>
        <strain>K12 / MG1655 / ATCC 47076</strain>
    </source>
</reference>
<reference key="6">
    <citation type="journal article" date="2006" name="Mol. Syst. Biol.">
        <title>Highly accurate genome sequences of Escherichia coli K-12 strains MG1655 and W3110.</title>
        <authorList>
            <person name="Hayashi K."/>
            <person name="Morooka N."/>
            <person name="Yamamoto Y."/>
            <person name="Fujita K."/>
            <person name="Isono K."/>
            <person name="Choi S."/>
            <person name="Ohtsubo E."/>
            <person name="Baba T."/>
            <person name="Wanner B.L."/>
            <person name="Mori H."/>
            <person name="Horiuchi T."/>
        </authorList>
    </citation>
    <scope>NUCLEOTIDE SEQUENCE [LARGE SCALE GENOMIC DNA]</scope>
    <source>
        <strain>K12 / W3110 / ATCC 27325 / DSM 5911</strain>
    </source>
</reference>
<reference key="7">
    <citation type="journal article" date="1997" name="Electrophoresis">
        <title>Comparing the predicted and observed properties of proteins encoded in the genome of Escherichia coli K-12.</title>
        <authorList>
            <person name="Link A.J."/>
            <person name="Robison K."/>
            <person name="Church G.M."/>
        </authorList>
    </citation>
    <scope>PROTEIN SEQUENCE OF 21-32</scope>
    <source>
        <strain>K12 / EMG2</strain>
    </source>
</reference>
<reference key="8">
    <citation type="journal article" date="1997" name="Electrophoresis">
        <title>Escherichia coli proteome analysis using the gene-protein database.</title>
        <authorList>
            <person name="VanBogelen R.A."/>
            <person name="Abshire K.Z."/>
            <person name="Moldover B."/>
            <person name="Olson E.R."/>
            <person name="Neidhardt F.C."/>
        </authorList>
    </citation>
    <scope>IDENTIFICATION BY 2D-GEL</scope>
</reference>
<reference key="9">
    <citation type="journal article" date="1994" name="EMBO J.">
        <title>Macromolecular chelation as an improved mechanism of protease inhibition: structure of the ecotin-trypsin complex.</title>
        <authorList>
            <person name="McGrath M.E."/>
            <person name="Erpel T."/>
            <person name="Bystroff C."/>
            <person name="Fletterick R.J."/>
        </authorList>
    </citation>
    <scope>X-RAY CRYSTALLOGRAPHY (2.4 ANGSTROMS)</scope>
</reference>
<reference key="10">
    <citation type="journal article" date="1996" name="Protein Sci.">
        <title>Crystal structure analyses of uncomplexed ecotin in two crystal forms: implications for its function and stability.</title>
        <authorList>
            <person name="Shin D.H.A."/>
            <person name="Song H.K."/>
            <person name="Seong I.S."/>
            <person name="Lee C.S."/>
            <person name="Chung C.H."/>
            <person name="Suh S.W."/>
        </authorList>
    </citation>
    <scope>X-RAY CRYSTALLOGRAPHY (2.68 ANGSTROMS)</scope>
</reference>
<reference key="11">
    <citation type="journal article" date="1997" name="Biochemistry">
        <title>Crystal structure of an ecotin-collagenase complex suggests a model for recognition and cleavage of the collagen triple helix.</title>
        <authorList>
            <person name="Perona J.J."/>
            <person name="Tsu C.A."/>
            <person name="Craik C.S."/>
            <person name="Fletterick R.J."/>
        </authorList>
    </citation>
    <scope>X-RAY CRYSTALLOGRAPHY (2.3 ANGSTROMS) OF COMPLEX WITH UCA COLLAGENASE</scope>
</reference>
<reference key="12">
    <citation type="journal article" date="2000" name="J. Mol. Biol.">
        <title>Compromise and accommodation in ecotin, a dimeric macromolecular inhibitor of serine proteases.</title>
        <authorList>
            <person name="Gillmor S.A."/>
            <person name="Takeuchi T."/>
            <person name="Yang S.Q."/>
            <person name="Craik C.S."/>
            <person name="Fletterick R.J."/>
        </authorList>
    </citation>
    <scope>X-RAY CRYSTALLOGRAPHY (2.3 ANGSTROMS)</scope>
</reference>
<reference key="13">
    <citation type="journal article" date="2001" name="Biochemistry">
        <title>Crystal structure of thrombin-ecotin reveals conformational changes and extended interactions.</title>
        <authorList>
            <person name="Wang S.X."/>
            <person name="Esmon C.T."/>
            <person name="Fletterick R.J."/>
        </authorList>
    </citation>
    <scope>X-RAY CRYSTALLOGRAPHY (2.5 ANGSTROMS) OF MUTANT ARG-104</scope>
</reference>
<reference key="14">
    <citation type="journal article" date="1995" name="Protein Sci.">
        <title>Ecotin: lessons on survival in a protease-filled world.</title>
        <authorList>
            <person name="McGrath M.E."/>
            <person name="Gillmor S.A."/>
            <person name="Fletterick R.J."/>
        </authorList>
    </citation>
    <scope>REVIEW</scope>
</reference>
<feature type="signal peptide" evidence="1 2">
    <location>
        <begin position="1"/>
        <end position="20"/>
    </location>
</feature>
<feature type="chain" id="PRO_0000007423" description="Ecotin">
    <location>
        <begin position="21"/>
        <end position="162"/>
    </location>
</feature>
<feature type="site" description="Reactive bond">
    <location>
        <begin position="104"/>
        <end position="105"/>
    </location>
</feature>
<feature type="disulfide bond">
    <location>
        <begin position="70"/>
        <end position="107"/>
    </location>
</feature>
<feature type="helix" evidence="5">
    <location>
        <begin position="27"/>
        <end position="29"/>
    </location>
</feature>
<feature type="strand" evidence="6">
    <location>
        <begin position="40"/>
        <end position="45"/>
    </location>
</feature>
<feature type="helix" evidence="6">
    <location>
        <begin position="53"/>
        <end position="55"/>
    </location>
</feature>
<feature type="strand" evidence="6">
    <location>
        <begin position="56"/>
        <end position="68"/>
    </location>
</feature>
<feature type="strand" evidence="7">
    <location>
        <begin position="70"/>
        <end position="72"/>
    </location>
</feature>
<feature type="strand" evidence="6">
    <location>
        <begin position="73"/>
        <end position="75"/>
    </location>
</feature>
<feature type="strand" evidence="6">
    <location>
        <begin position="78"/>
        <end position="83"/>
    </location>
</feature>
<feature type="turn" evidence="6">
    <location>
        <begin position="85"/>
        <end position="87"/>
    </location>
</feature>
<feature type="strand" evidence="6">
    <location>
        <begin position="90"/>
        <end position="95"/>
    </location>
</feature>
<feature type="strand" evidence="6">
    <location>
        <begin position="101"/>
        <end position="103"/>
    </location>
</feature>
<feature type="strand" evidence="5">
    <location>
        <begin position="108"/>
        <end position="110"/>
    </location>
</feature>
<feature type="strand" evidence="6">
    <location>
        <begin position="113"/>
        <end position="119"/>
    </location>
</feature>
<feature type="helix" evidence="6">
    <location>
        <begin position="122"/>
        <end position="125"/>
    </location>
</feature>
<feature type="strand" evidence="6">
    <location>
        <begin position="126"/>
        <end position="128"/>
    </location>
</feature>
<feature type="strand" evidence="4">
    <location>
        <begin position="131"/>
        <end position="133"/>
    </location>
</feature>
<feature type="strand" evidence="6">
    <location>
        <begin position="135"/>
        <end position="140"/>
    </location>
</feature>
<feature type="strand" evidence="6">
    <location>
        <begin position="144"/>
        <end position="151"/>
    </location>
</feature>
<comment type="function">
    <text>General inhibitor of pancreatic serine proteases: inhibits chymotrypsin, trypsin, elastases, factor X, kallikrein as well as a variety of other proteases. The strength of inhibition does not appear to be correlated with a particular protease specificity.</text>
</comment>
<comment type="subunit">
    <text>Homodimer.</text>
</comment>
<comment type="interaction">
    <interactant intactId="EBI-1029159">
        <id>P23827</id>
    </interactant>
    <interactant intactId="EBI-1041019">
        <id>P03951</id>
        <label>F11</label>
    </interactant>
    <organismsDiffer>true</organismsDiffer>
    <experiments>3</experiments>
</comment>
<comment type="interaction">
    <interactant intactId="EBI-1029159">
        <id>P23827</id>
    </interactant>
    <interactant intactId="EBI-26435098">
        <id>P48740-2</id>
        <label>MASP1</label>
    </interactant>
    <organismsDiffer>true</organismsDiffer>
    <experiments>3</experiments>
</comment>
<comment type="interaction">
    <interactant intactId="EBI-1029159">
        <id>P23827</id>
    </interactant>
    <interactant intactId="EBI-1029166">
        <id>P00763</id>
        <label>Prss2</label>
    </interactant>
    <organismsDiffer>true</organismsDiffer>
    <experiments>2</experiments>
</comment>
<comment type="subcellular location">
    <subcellularLocation>
        <location>Periplasm</location>
    </subcellularLocation>
</comment>
<comment type="similarity">
    <text evidence="3">Belongs to the protease inhibitor I11 (ecotin) family.</text>
</comment>
<comment type="sequence caution" evidence="3">
    <conflict type="erroneous initiation">
        <sequence resource="EMBL-CDS" id="AAA16410"/>
    </conflict>
</comment>
<dbReference type="EMBL" id="M60876">
    <property type="protein sequence ID" value="AAA23719.1"/>
    <property type="molecule type" value="Genomic_DNA"/>
</dbReference>
<dbReference type="EMBL" id="X61951">
    <property type="protein sequence ID" value="CAA43954.1"/>
    <property type="molecule type" value="Genomic_DNA"/>
</dbReference>
<dbReference type="EMBL" id="U00008">
    <property type="protein sequence ID" value="AAA16410.1"/>
    <property type="status" value="ALT_INIT"/>
    <property type="molecule type" value="Genomic_DNA"/>
</dbReference>
<dbReference type="EMBL" id="U00096">
    <property type="protein sequence ID" value="AAC75269.1"/>
    <property type="molecule type" value="Genomic_DNA"/>
</dbReference>
<dbReference type="EMBL" id="AP009048">
    <property type="protein sequence ID" value="BAA15992.1"/>
    <property type="molecule type" value="Genomic_DNA"/>
</dbReference>
<dbReference type="PIR" id="A38742">
    <property type="entry name" value="A38742"/>
</dbReference>
<dbReference type="RefSeq" id="NP_416713.1">
    <property type="nucleotide sequence ID" value="NC_000913.3"/>
</dbReference>
<dbReference type="RefSeq" id="WP_000849209.1">
    <property type="nucleotide sequence ID" value="NZ_CP047127.1"/>
</dbReference>
<dbReference type="PDB" id="1AZZ">
    <property type="method" value="X-ray"/>
    <property type="resolution" value="2.30 A"/>
    <property type="chains" value="C/D=21-162"/>
</dbReference>
<dbReference type="PDB" id="1ECY">
    <property type="method" value="X-ray"/>
    <property type="resolution" value="2.19 A"/>
    <property type="chains" value="A=21-162"/>
</dbReference>
<dbReference type="PDB" id="1ECZ">
    <property type="method" value="X-ray"/>
    <property type="resolution" value="2.68 A"/>
    <property type="chains" value="A/B=21-162"/>
</dbReference>
<dbReference type="PDB" id="1EZS">
    <property type="method" value="X-ray"/>
    <property type="resolution" value="2.30 A"/>
    <property type="chains" value="A/B=21-162"/>
</dbReference>
<dbReference type="PDB" id="1EZU">
    <property type="method" value="X-ray"/>
    <property type="resolution" value="2.40 A"/>
    <property type="chains" value="A/B=21-162"/>
</dbReference>
<dbReference type="PDB" id="1FI8">
    <property type="method" value="X-ray"/>
    <property type="resolution" value="2.20 A"/>
    <property type="chains" value="C/E=21-109, D/F=105-162"/>
</dbReference>
<dbReference type="PDB" id="1ID5">
    <property type="method" value="X-ray"/>
    <property type="resolution" value="2.50 A"/>
    <property type="chains" value="I=21-162"/>
</dbReference>
<dbReference type="PDB" id="1IFG">
    <property type="method" value="X-ray"/>
    <property type="resolution" value="2.00 A"/>
    <property type="chains" value="A=26-162"/>
</dbReference>
<dbReference type="PDB" id="1N8O">
    <property type="method" value="X-ray"/>
    <property type="resolution" value="2.00 A"/>
    <property type="chains" value="E=21-162"/>
</dbReference>
<dbReference type="PDB" id="1P0S">
    <property type="method" value="X-ray"/>
    <property type="resolution" value="2.80 A"/>
    <property type="chains" value="E=21-162"/>
</dbReference>
<dbReference type="PDB" id="1SLU">
    <property type="method" value="X-ray"/>
    <property type="resolution" value="1.80 A"/>
    <property type="chains" value="A=21-162"/>
</dbReference>
<dbReference type="PDB" id="1SLV">
    <property type="method" value="X-ray"/>
    <property type="resolution" value="2.30 A"/>
    <property type="chains" value="A=21-162"/>
</dbReference>
<dbReference type="PDB" id="1SLW">
    <property type="method" value="X-ray"/>
    <property type="resolution" value="2.00 A"/>
    <property type="chains" value="A=21-162"/>
</dbReference>
<dbReference type="PDB" id="1SLX">
    <property type="method" value="X-ray"/>
    <property type="resolution" value="2.20 A"/>
    <property type="chains" value="A=21-162"/>
</dbReference>
<dbReference type="PDB" id="1XX9">
    <property type="method" value="X-ray"/>
    <property type="resolution" value="2.20 A"/>
    <property type="chains" value="C/D=21-162"/>
</dbReference>
<dbReference type="PDB" id="1XXD">
    <property type="method" value="X-ray"/>
    <property type="resolution" value="2.91 A"/>
    <property type="chains" value="C/D=21-162"/>
</dbReference>
<dbReference type="PDB" id="1XXF">
    <property type="method" value="X-ray"/>
    <property type="resolution" value="2.60 A"/>
    <property type="chains" value="C/D=21-162"/>
</dbReference>
<dbReference type="PDB" id="4IW4">
    <property type="method" value="X-ray"/>
    <property type="resolution" value="3.20 A"/>
    <property type="chains" value="C/D=21-162"/>
</dbReference>
<dbReference type="PDB" id="4NIY">
    <property type="method" value="X-ray"/>
    <property type="resolution" value="2.84 A"/>
    <property type="chains" value="E/F/G/H=21-162"/>
</dbReference>
<dbReference type="PDB" id="7CBK">
    <property type="method" value="X-ray"/>
    <property type="resolution" value="2.70 A"/>
    <property type="chains" value="A/C=1-162"/>
</dbReference>
<dbReference type="PDB" id="7PQN">
    <property type="method" value="X-ray"/>
    <property type="resolution" value="2.40 A"/>
    <property type="chains" value="C/D=1-162"/>
</dbReference>
<dbReference type="PDB" id="7PQO">
    <property type="method" value="X-ray"/>
    <property type="resolution" value="3.39 A"/>
    <property type="chains" value="I/J/K=1-162"/>
</dbReference>
<dbReference type="PDBsum" id="1AZZ"/>
<dbReference type="PDBsum" id="1ECY"/>
<dbReference type="PDBsum" id="1ECZ"/>
<dbReference type="PDBsum" id="1EZS"/>
<dbReference type="PDBsum" id="1EZU"/>
<dbReference type="PDBsum" id="1FI8"/>
<dbReference type="PDBsum" id="1ID5"/>
<dbReference type="PDBsum" id="1IFG"/>
<dbReference type="PDBsum" id="1N8O"/>
<dbReference type="PDBsum" id="1P0S"/>
<dbReference type="PDBsum" id="1SLU"/>
<dbReference type="PDBsum" id="1SLV"/>
<dbReference type="PDBsum" id="1SLW"/>
<dbReference type="PDBsum" id="1SLX"/>
<dbReference type="PDBsum" id="1XX9"/>
<dbReference type="PDBsum" id="1XXD"/>
<dbReference type="PDBsum" id="1XXF"/>
<dbReference type="PDBsum" id="4IW4"/>
<dbReference type="PDBsum" id="4NIY"/>
<dbReference type="PDBsum" id="7CBK"/>
<dbReference type="PDBsum" id="7PQN"/>
<dbReference type="PDBsum" id="7PQO"/>
<dbReference type="PCDDB" id="P23827"/>
<dbReference type="SMR" id="P23827"/>
<dbReference type="BioGRID" id="4262218">
    <property type="interactions" value="17"/>
</dbReference>
<dbReference type="BioGRID" id="851041">
    <property type="interactions" value="1"/>
</dbReference>
<dbReference type="FunCoup" id="P23827">
    <property type="interactions" value="41"/>
</dbReference>
<dbReference type="IntAct" id="P23827">
    <property type="interactions" value="8"/>
</dbReference>
<dbReference type="MINT" id="P23827"/>
<dbReference type="STRING" id="511145.b2209"/>
<dbReference type="DrugBank" id="DB02379">
    <property type="generic name" value="Beta-D-Glucose"/>
</dbReference>
<dbReference type="MEROPS" id="I11.001"/>
<dbReference type="jPOST" id="P23827"/>
<dbReference type="PaxDb" id="511145-b2209"/>
<dbReference type="EnsemblBacteria" id="AAC75269">
    <property type="protein sequence ID" value="AAC75269"/>
    <property type="gene ID" value="b2209"/>
</dbReference>
<dbReference type="GeneID" id="946700"/>
<dbReference type="KEGG" id="ecj:JW2197"/>
<dbReference type="KEGG" id="eco:b2209"/>
<dbReference type="KEGG" id="ecoc:C3026_12345"/>
<dbReference type="PATRIC" id="fig|1411691.4.peg.26"/>
<dbReference type="EchoBASE" id="EB0251"/>
<dbReference type="eggNOG" id="COG4574">
    <property type="taxonomic scope" value="Bacteria"/>
</dbReference>
<dbReference type="HOGENOM" id="CLU_111565_0_0_6"/>
<dbReference type="InParanoid" id="P23827"/>
<dbReference type="OMA" id="PKAEKGM"/>
<dbReference type="OrthoDB" id="997196at2"/>
<dbReference type="PhylomeDB" id="P23827"/>
<dbReference type="BioCyc" id="EcoCyc:EG10255-MONOMER"/>
<dbReference type="EvolutionaryTrace" id="P23827"/>
<dbReference type="PRO" id="PR:P23827"/>
<dbReference type="Proteomes" id="UP000000625">
    <property type="component" value="Chromosome"/>
</dbReference>
<dbReference type="GO" id="GO:0030288">
    <property type="term" value="C:outer membrane-bounded periplasmic space"/>
    <property type="evidence" value="ECO:0000314"/>
    <property type="project" value="EcoCyc"/>
</dbReference>
<dbReference type="GO" id="GO:0042803">
    <property type="term" value="F:protein homodimerization activity"/>
    <property type="evidence" value="ECO:0000314"/>
    <property type="project" value="EcoCyc"/>
</dbReference>
<dbReference type="GO" id="GO:0004867">
    <property type="term" value="F:serine-type endopeptidase inhibitor activity"/>
    <property type="evidence" value="ECO:0000314"/>
    <property type="project" value="EcoCyc"/>
</dbReference>
<dbReference type="GO" id="GO:0006952">
    <property type="term" value="P:defense response"/>
    <property type="evidence" value="ECO:0000305"/>
    <property type="project" value="EcoCyc"/>
</dbReference>
<dbReference type="CDD" id="cd00242">
    <property type="entry name" value="Ecotin"/>
    <property type="match status" value="1"/>
</dbReference>
<dbReference type="FunFam" id="2.60.40.550:FF:000001">
    <property type="entry name" value="Ecotin"/>
    <property type="match status" value="1"/>
</dbReference>
<dbReference type="FunFam" id="4.10.1230.10:FF:000001">
    <property type="entry name" value="Ecotin"/>
    <property type="match status" value="1"/>
</dbReference>
<dbReference type="Gene3D" id="2.60.40.550">
    <property type="entry name" value="Ecotin"/>
    <property type="match status" value="1"/>
</dbReference>
<dbReference type="Gene3D" id="4.10.1230.10">
    <property type="entry name" value="Ecotin, trypsin inhibitor"/>
    <property type="match status" value="1"/>
</dbReference>
<dbReference type="HAMAP" id="MF_00706">
    <property type="entry name" value="Ecotin"/>
    <property type="match status" value="1"/>
</dbReference>
<dbReference type="InterPro" id="IPR027438">
    <property type="entry name" value="Ecotin_C"/>
</dbReference>
<dbReference type="InterPro" id="IPR036198">
    <property type="entry name" value="Ecotin_sf"/>
</dbReference>
<dbReference type="InterPro" id="IPR005658">
    <property type="entry name" value="Prot_inh_ecotin"/>
</dbReference>
<dbReference type="InterPro" id="IPR023084">
    <property type="entry name" value="Prot_inh_ecotin_gammaproteobac"/>
</dbReference>
<dbReference type="NCBIfam" id="NF002987">
    <property type="entry name" value="PRK03719.1"/>
    <property type="match status" value="1"/>
</dbReference>
<dbReference type="PANTHER" id="PTHR35890">
    <property type="match status" value="1"/>
</dbReference>
<dbReference type="PANTHER" id="PTHR35890:SF3">
    <property type="entry name" value="ECOTIN"/>
    <property type="match status" value="1"/>
</dbReference>
<dbReference type="Pfam" id="PF03974">
    <property type="entry name" value="Ecotin"/>
    <property type="match status" value="1"/>
</dbReference>
<dbReference type="PIRSF" id="PIRSF006865">
    <property type="entry name" value="Prot_inh_ecotin"/>
    <property type="match status" value="1"/>
</dbReference>
<dbReference type="SUPFAM" id="SSF49772">
    <property type="entry name" value="Ecotin, trypsin inhibitor"/>
    <property type="match status" value="1"/>
</dbReference>
<evidence type="ECO:0000269" key="1">
    <source>
    </source>
</evidence>
<evidence type="ECO:0000269" key="2">
    <source>
    </source>
</evidence>
<evidence type="ECO:0000305" key="3"/>
<evidence type="ECO:0007829" key="4">
    <source>
        <dbReference type="PDB" id="1EZS"/>
    </source>
</evidence>
<evidence type="ECO:0007829" key="5">
    <source>
        <dbReference type="PDB" id="1IFG"/>
    </source>
</evidence>
<evidence type="ECO:0007829" key="6">
    <source>
        <dbReference type="PDB" id="1SLU"/>
    </source>
</evidence>
<evidence type="ECO:0007829" key="7">
    <source>
        <dbReference type="PDB" id="1XXD"/>
    </source>
</evidence>
<protein>
    <recommendedName>
        <fullName>Ecotin</fullName>
    </recommendedName>
</protein>
<sequence length="162" mass="18192">MKTILPAVLFAAFATTSAWAAESVQPLEKIAPYPQAEKGMKRQVIQLTPQEDESTLKVELLIGQTLEVDCNLHRLGGKLENKTLEGWGYDYYVFDKVSSPVSTMMACPDGKKEKKFVTAYLGDAGMLRYNSKLPIVVYTPDNVDVKYRVWKAEEKIDNAVVR</sequence>
<proteinExistence type="evidence at protein level"/>
<organism>
    <name type="scientific">Escherichia coli (strain K12)</name>
    <dbReference type="NCBI Taxonomy" id="83333"/>
    <lineage>
        <taxon>Bacteria</taxon>
        <taxon>Pseudomonadati</taxon>
        <taxon>Pseudomonadota</taxon>
        <taxon>Gammaproteobacteria</taxon>
        <taxon>Enterobacterales</taxon>
        <taxon>Enterobacteriaceae</taxon>
        <taxon>Escherichia</taxon>
    </lineage>
</organism>
<gene>
    <name type="primary">eco</name>
    <name type="synonym">eti</name>
    <name type="ordered locus">b2209</name>
    <name type="ordered locus">JW2197</name>
</gene>
<name>ECOT_ECOLI</name>
<keyword id="KW-0002">3D-structure</keyword>
<keyword id="KW-0903">Direct protein sequencing</keyword>
<keyword id="KW-1015">Disulfide bond</keyword>
<keyword id="KW-0574">Periplasm</keyword>
<keyword id="KW-0646">Protease inhibitor</keyword>
<keyword id="KW-1185">Reference proteome</keyword>
<keyword id="KW-0722">Serine protease inhibitor</keyword>
<keyword id="KW-0732">Signal</keyword>
<accession>P23827</accession>